<comment type="function">
    <text evidence="1">Could be involved in insertion of integral membrane proteins into the membrane.</text>
</comment>
<comment type="subcellular location">
    <subcellularLocation>
        <location evidence="1">Cell inner membrane</location>
        <topology evidence="1">Peripheral membrane protein</topology>
        <orientation evidence="1">Cytoplasmic side</orientation>
    </subcellularLocation>
</comment>
<comment type="similarity">
    <text evidence="1">Belongs to the UPF0161 family.</text>
</comment>
<organism>
    <name type="scientific">Serratia proteamaculans (strain 568)</name>
    <dbReference type="NCBI Taxonomy" id="399741"/>
    <lineage>
        <taxon>Bacteria</taxon>
        <taxon>Pseudomonadati</taxon>
        <taxon>Pseudomonadota</taxon>
        <taxon>Gammaproteobacteria</taxon>
        <taxon>Enterobacterales</taxon>
        <taxon>Yersiniaceae</taxon>
        <taxon>Serratia</taxon>
    </lineage>
</organism>
<feature type="chain" id="PRO_1000060729" description="Putative membrane protein insertion efficiency factor">
    <location>
        <begin position="1"/>
        <end position="85"/>
    </location>
</feature>
<protein>
    <recommendedName>
        <fullName evidence="1">Putative membrane protein insertion efficiency factor</fullName>
    </recommendedName>
</protein>
<gene>
    <name type="ordered locus">Spro_0029</name>
</gene>
<accession>A8G7P9</accession>
<keyword id="KW-0997">Cell inner membrane</keyword>
<keyword id="KW-1003">Cell membrane</keyword>
<keyword id="KW-0472">Membrane</keyword>
<proteinExistence type="inferred from homology"/>
<reference key="1">
    <citation type="submission" date="2007-09" db="EMBL/GenBank/DDBJ databases">
        <title>Complete sequence of chromosome of Serratia proteamaculans 568.</title>
        <authorList>
            <consortium name="US DOE Joint Genome Institute"/>
            <person name="Copeland A."/>
            <person name="Lucas S."/>
            <person name="Lapidus A."/>
            <person name="Barry K."/>
            <person name="Glavina del Rio T."/>
            <person name="Dalin E."/>
            <person name="Tice H."/>
            <person name="Pitluck S."/>
            <person name="Chain P."/>
            <person name="Malfatti S."/>
            <person name="Shin M."/>
            <person name="Vergez L."/>
            <person name="Schmutz J."/>
            <person name="Larimer F."/>
            <person name="Land M."/>
            <person name="Hauser L."/>
            <person name="Kyrpides N."/>
            <person name="Kim E."/>
            <person name="Taghavi S."/>
            <person name="Newman L."/>
            <person name="Vangronsveld J."/>
            <person name="van der Lelie D."/>
            <person name="Richardson P."/>
        </authorList>
    </citation>
    <scope>NUCLEOTIDE SEQUENCE [LARGE SCALE GENOMIC DNA]</scope>
    <source>
        <strain>568</strain>
    </source>
</reference>
<evidence type="ECO:0000255" key="1">
    <source>
        <dbReference type="HAMAP-Rule" id="MF_00386"/>
    </source>
</evidence>
<dbReference type="EMBL" id="CP000826">
    <property type="protein sequence ID" value="ABV39139.1"/>
    <property type="molecule type" value="Genomic_DNA"/>
</dbReference>
<dbReference type="STRING" id="399741.Spro_0029"/>
<dbReference type="KEGG" id="spe:Spro_0029"/>
<dbReference type="eggNOG" id="COG0759">
    <property type="taxonomic scope" value="Bacteria"/>
</dbReference>
<dbReference type="HOGENOM" id="CLU_144811_5_2_6"/>
<dbReference type="OrthoDB" id="9801753at2"/>
<dbReference type="GO" id="GO:0005886">
    <property type="term" value="C:plasma membrane"/>
    <property type="evidence" value="ECO:0007669"/>
    <property type="project" value="UniProtKB-SubCell"/>
</dbReference>
<dbReference type="HAMAP" id="MF_00386">
    <property type="entry name" value="UPF0161_YidD"/>
    <property type="match status" value="1"/>
</dbReference>
<dbReference type="InterPro" id="IPR002696">
    <property type="entry name" value="Membr_insert_effic_factor_YidD"/>
</dbReference>
<dbReference type="NCBIfam" id="TIGR00278">
    <property type="entry name" value="membrane protein insertion efficiency factor YidD"/>
    <property type="match status" value="1"/>
</dbReference>
<dbReference type="PANTHER" id="PTHR33383">
    <property type="entry name" value="MEMBRANE PROTEIN INSERTION EFFICIENCY FACTOR-RELATED"/>
    <property type="match status" value="1"/>
</dbReference>
<dbReference type="PANTHER" id="PTHR33383:SF1">
    <property type="entry name" value="MEMBRANE PROTEIN INSERTION EFFICIENCY FACTOR-RELATED"/>
    <property type="match status" value="1"/>
</dbReference>
<dbReference type="Pfam" id="PF01809">
    <property type="entry name" value="YidD"/>
    <property type="match status" value="1"/>
</dbReference>
<dbReference type="SMART" id="SM01234">
    <property type="entry name" value="Haemolytic"/>
    <property type="match status" value="1"/>
</dbReference>
<name>YIDD_SERP5</name>
<sequence>MASPLSPGSRILIGLVRAYQLVISPLLGPRCRFQPTCSHYAIEALSRFGMIKGSWLALKRVLKCHPLNPGGDDPVPPKPDDNREH</sequence>